<evidence type="ECO:0000255" key="1">
    <source>
        <dbReference type="HAMAP-Rule" id="MF_00040"/>
    </source>
</evidence>
<protein>
    <recommendedName>
        <fullName evidence="1">Ribosome-recycling factor</fullName>
        <shortName evidence="1">RRF</shortName>
    </recommendedName>
    <alternativeName>
        <fullName evidence="1">Ribosome-releasing factor</fullName>
    </alternativeName>
</protein>
<feature type="chain" id="PRO_0000167443" description="Ribosome-recycling factor">
    <location>
        <begin position="1"/>
        <end position="185"/>
    </location>
</feature>
<organism>
    <name type="scientific">Chromobacterium violaceum (strain ATCC 12472 / DSM 30191 / JCM 1249 / CCUG 213 / NBRC 12614 / NCIMB 9131 / NCTC 9757 / MK)</name>
    <dbReference type="NCBI Taxonomy" id="243365"/>
    <lineage>
        <taxon>Bacteria</taxon>
        <taxon>Pseudomonadati</taxon>
        <taxon>Pseudomonadota</taxon>
        <taxon>Betaproteobacteria</taxon>
        <taxon>Neisseriales</taxon>
        <taxon>Chromobacteriaceae</taxon>
        <taxon>Chromobacterium</taxon>
    </lineage>
</organism>
<sequence length="185" mass="20916">MINEIKKSAEQKMQKTLEAFKNDLAKVRTGRAHTGILDHVMVDYYGSDVPVNQVANVTLIDARTIGVQPWEKPMLAKIEKAIRDSDLGLNPASMGEIIRVPMPMLTEERRKDLIKVVRGEAEGARVAVRNIRRDSNTEFKNLLKDKAITEDDERRGQDEIQKLTDKYTAEIDKMLATKEADLLAV</sequence>
<name>RRF_CHRVO</name>
<comment type="function">
    <text evidence="1">Responsible for the release of ribosomes from messenger RNA at the termination of protein biosynthesis. May increase the efficiency of translation by recycling ribosomes from one round of translation to another.</text>
</comment>
<comment type="subcellular location">
    <subcellularLocation>
        <location evidence="1">Cytoplasm</location>
    </subcellularLocation>
</comment>
<comment type="similarity">
    <text evidence="1">Belongs to the RRF family.</text>
</comment>
<keyword id="KW-0963">Cytoplasm</keyword>
<keyword id="KW-0648">Protein biosynthesis</keyword>
<keyword id="KW-1185">Reference proteome</keyword>
<gene>
    <name evidence="1" type="primary">frr</name>
    <name type="ordered locus">CV_2199</name>
</gene>
<accession>Q7NVZ1</accession>
<reference key="1">
    <citation type="journal article" date="2003" name="Proc. Natl. Acad. Sci. U.S.A.">
        <title>The complete genome sequence of Chromobacterium violaceum reveals remarkable and exploitable bacterial adaptability.</title>
        <authorList>
            <person name="Vasconcelos A.T.R."/>
            <person name="de Almeida D.F."/>
            <person name="Hungria M."/>
            <person name="Guimaraes C.T."/>
            <person name="Antonio R.V."/>
            <person name="Almeida F.C."/>
            <person name="de Almeida L.G.P."/>
            <person name="de Almeida R."/>
            <person name="Alves-Gomes J.A."/>
            <person name="Andrade E.M."/>
            <person name="Araripe J."/>
            <person name="de Araujo M.F.F."/>
            <person name="Astolfi-Filho S."/>
            <person name="Azevedo V."/>
            <person name="Baptista A.J."/>
            <person name="Bataus L.A.M."/>
            <person name="Batista J.S."/>
            <person name="Belo A."/>
            <person name="van den Berg C."/>
            <person name="Bogo M."/>
            <person name="Bonatto S."/>
            <person name="Bordignon J."/>
            <person name="Brigido M.M."/>
            <person name="Brito C.A."/>
            <person name="Brocchi M."/>
            <person name="Burity H.A."/>
            <person name="Camargo A.A."/>
            <person name="Cardoso D.D.P."/>
            <person name="Carneiro N.P."/>
            <person name="Carraro D.M."/>
            <person name="Carvalho C.M.B."/>
            <person name="Cascardo J.C.M."/>
            <person name="Cavada B.S."/>
            <person name="Chueire L.M.O."/>
            <person name="Creczynski-Pasa T.B."/>
            <person name="Cunha-Junior N.C."/>
            <person name="Fagundes N."/>
            <person name="Falcao C.L."/>
            <person name="Fantinatti F."/>
            <person name="Farias I.P."/>
            <person name="Felipe M.S.S."/>
            <person name="Ferrari L.P."/>
            <person name="Ferro J.A."/>
            <person name="Ferro M.I.T."/>
            <person name="Franco G.R."/>
            <person name="Freitas N.S.A."/>
            <person name="Furlan L.R."/>
            <person name="Gazzinelli R.T."/>
            <person name="Gomes E.A."/>
            <person name="Goncalves P.R."/>
            <person name="Grangeiro T.B."/>
            <person name="Grattapaglia D."/>
            <person name="Grisard E.C."/>
            <person name="Hanna E.S."/>
            <person name="Jardim S.N."/>
            <person name="Laurino J."/>
            <person name="Leoi L.C.T."/>
            <person name="Lima L.F.A."/>
            <person name="Loureiro M.F."/>
            <person name="Lyra M.C.C.P."/>
            <person name="Madeira H.M.F."/>
            <person name="Manfio G.P."/>
            <person name="Maranhao A.Q."/>
            <person name="Martins W.S."/>
            <person name="di Mauro S.M.Z."/>
            <person name="de Medeiros S.R.B."/>
            <person name="Meissner R.V."/>
            <person name="Moreira M.A.M."/>
            <person name="Nascimento F.F."/>
            <person name="Nicolas M.F."/>
            <person name="Oliveira J.G."/>
            <person name="Oliveira S.C."/>
            <person name="Paixao R.F.C."/>
            <person name="Parente J.A."/>
            <person name="Pedrosa F.O."/>
            <person name="Pena S.D.J."/>
            <person name="Pereira J.O."/>
            <person name="Pereira M."/>
            <person name="Pinto L.S.R.C."/>
            <person name="Pinto L.S."/>
            <person name="Porto J.I.R."/>
            <person name="Potrich D.P."/>
            <person name="Ramalho-Neto C.E."/>
            <person name="Reis A.M.M."/>
            <person name="Rigo L.U."/>
            <person name="Rondinelli E."/>
            <person name="Santos E.B.P."/>
            <person name="Santos F.R."/>
            <person name="Schneider M.P.C."/>
            <person name="Seuanez H.N."/>
            <person name="Silva A.M.R."/>
            <person name="da Silva A.L.C."/>
            <person name="Silva D.W."/>
            <person name="Silva R."/>
            <person name="Simoes I.C."/>
            <person name="Simon D."/>
            <person name="Soares C.M.A."/>
            <person name="Soares R.B.A."/>
            <person name="Souza E.M."/>
            <person name="Souza K.R.L."/>
            <person name="Souza R.C."/>
            <person name="Steffens M.B.R."/>
            <person name="Steindel M."/>
            <person name="Teixeira S.R."/>
            <person name="Urmenyi T."/>
            <person name="Vettore A."/>
            <person name="Wassem R."/>
            <person name="Zaha A."/>
            <person name="Simpson A.J.G."/>
        </authorList>
    </citation>
    <scope>NUCLEOTIDE SEQUENCE [LARGE SCALE GENOMIC DNA]</scope>
    <source>
        <strain>ATCC 12472 / DSM 30191 / JCM 1249 / CCUG 213 / NBRC 12614 / NCIMB 9131 / NCTC 9757 / MK</strain>
    </source>
</reference>
<dbReference type="EMBL" id="AE016825">
    <property type="protein sequence ID" value="AAQ59872.1"/>
    <property type="molecule type" value="Genomic_DNA"/>
</dbReference>
<dbReference type="RefSeq" id="WP_011135747.1">
    <property type="nucleotide sequence ID" value="NC_005085.1"/>
</dbReference>
<dbReference type="SMR" id="Q7NVZ1"/>
<dbReference type="STRING" id="243365.CV_2199"/>
<dbReference type="GeneID" id="66367809"/>
<dbReference type="KEGG" id="cvi:CV_2199"/>
<dbReference type="eggNOG" id="COG0233">
    <property type="taxonomic scope" value="Bacteria"/>
</dbReference>
<dbReference type="HOGENOM" id="CLU_073981_2_1_4"/>
<dbReference type="OrthoDB" id="9804006at2"/>
<dbReference type="Proteomes" id="UP000001424">
    <property type="component" value="Chromosome"/>
</dbReference>
<dbReference type="GO" id="GO:0005829">
    <property type="term" value="C:cytosol"/>
    <property type="evidence" value="ECO:0007669"/>
    <property type="project" value="GOC"/>
</dbReference>
<dbReference type="GO" id="GO:0043023">
    <property type="term" value="F:ribosomal large subunit binding"/>
    <property type="evidence" value="ECO:0007669"/>
    <property type="project" value="TreeGrafter"/>
</dbReference>
<dbReference type="GO" id="GO:0002184">
    <property type="term" value="P:cytoplasmic translational termination"/>
    <property type="evidence" value="ECO:0007669"/>
    <property type="project" value="TreeGrafter"/>
</dbReference>
<dbReference type="CDD" id="cd00520">
    <property type="entry name" value="RRF"/>
    <property type="match status" value="1"/>
</dbReference>
<dbReference type="FunFam" id="1.10.132.20:FF:000001">
    <property type="entry name" value="Ribosome-recycling factor"/>
    <property type="match status" value="1"/>
</dbReference>
<dbReference type="FunFam" id="3.30.1360.40:FF:000001">
    <property type="entry name" value="Ribosome-recycling factor"/>
    <property type="match status" value="1"/>
</dbReference>
<dbReference type="Gene3D" id="3.30.1360.40">
    <property type="match status" value="1"/>
</dbReference>
<dbReference type="Gene3D" id="1.10.132.20">
    <property type="entry name" value="Ribosome-recycling factor"/>
    <property type="match status" value="1"/>
</dbReference>
<dbReference type="HAMAP" id="MF_00040">
    <property type="entry name" value="RRF"/>
    <property type="match status" value="1"/>
</dbReference>
<dbReference type="InterPro" id="IPR002661">
    <property type="entry name" value="Ribosome_recyc_fac"/>
</dbReference>
<dbReference type="InterPro" id="IPR023584">
    <property type="entry name" value="Ribosome_recyc_fac_dom"/>
</dbReference>
<dbReference type="InterPro" id="IPR036191">
    <property type="entry name" value="RRF_sf"/>
</dbReference>
<dbReference type="NCBIfam" id="TIGR00496">
    <property type="entry name" value="frr"/>
    <property type="match status" value="1"/>
</dbReference>
<dbReference type="PANTHER" id="PTHR20982:SF3">
    <property type="entry name" value="MITOCHONDRIAL RIBOSOME RECYCLING FACTOR PSEUDO 1"/>
    <property type="match status" value="1"/>
</dbReference>
<dbReference type="PANTHER" id="PTHR20982">
    <property type="entry name" value="RIBOSOME RECYCLING FACTOR"/>
    <property type="match status" value="1"/>
</dbReference>
<dbReference type="Pfam" id="PF01765">
    <property type="entry name" value="RRF"/>
    <property type="match status" value="1"/>
</dbReference>
<dbReference type="SUPFAM" id="SSF55194">
    <property type="entry name" value="Ribosome recycling factor, RRF"/>
    <property type="match status" value="1"/>
</dbReference>
<proteinExistence type="inferred from homology"/>